<sequence length="429" mass="46211">MPPPASSVDFTNLLNPQNNETGSAPSTPVDSSKAPSTPSSTQSNSTMASSVSLLPPLMKGARPATEEARQDLPRPYKCPLCDRAFHRLEHQTRHIRTHTGEKPHACQFPGCTKRFSRSDELTRHSRIHNNPNSRRSNKAHLAAAAAAAAAGQENAMVNVTNAGSLMPPPTKPMTRSAPVSQVGSPDVSPPHSFSNYAGHMRSNLGPYARNTERASSGMDINLLATAASQVERDEQHFGFHAGPRNHHLFASRHHTGRGLPSLSAYAISHSMSRSHSHEDEDGYTHRVKRSRPNSPNSTAPSSPTFSHDSLSPTPDHTPLATPAHSPRLRPLGSSELHLPSIRHLSLHHTPALAPMEPQPEGPNYYSPSQSHGPTISDIMSRPDGTQRKLPVPQVPKVAVQDMLNPSAGFSSVSSSTNNSVAGNDLAERF</sequence>
<gene>
    <name type="primary">creA</name>
    <name type="ORF">AO090026000464</name>
</gene>
<evidence type="ECO:0000250" key="1"/>
<evidence type="ECO:0000255" key="2">
    <source>
        <dbReference type="PROSITE-ProRule" id="PRU00042"/>
    </source>
</evidence>
<evidence type="ECO:0000256" key="3">
    <source>
        <dbReference type="SAM" id="MobiDB-lite"/>
    </source>
</evidence>
<evidence type="ECO:0000305" key="4"/>
<accession>Q9P889</accession>
<accession>Q2UEV4</accession>
<accession>Q9C408</accession>
<comment type="function">
    <text evidence="1">Transcription regulator component of the regulatory network controlling carbon source utilization through ubiquitination and deubiquitination involving creA, creB, creC, creD and acrB. Represses the transcription of the alcR, alcA and aldA genes by binding to a GC-rich region in their promoter. Also plays a role in response to carbon starvation and the control of extracellular proteases activity (By similarity).</text>
</comment>
<comment type="subunit">
    <text evidence="1">Interacts with creB.</text>
</comment>
<comment type="subcellular location">
    <subcellularLocation>
        <location evidence="1">Nucleus</location>
    </subcellularLocation>
</comment>
<comment type="PTM">
    <text evidence="1">Ubiquitinated. Deubiquitinated by creB, probably to control its activity or amount (By similarity).</text>
</comment>
<comment type="similarity">
    <text evidence="4">Belongs to the creA/MIG C2H2-type zinc-finger protein family.</text>
</comment>
<dbReference type="EMBL" id="AJ272151">
    <property type="protein sequence ID" value="CAB89774.1"/>
    <property type="molecule type" value="Genomic_DNA"/>
</dbReference>
<dbReference type="EMBL" id="AF322183">
    <property type="protein sequence ID" value="AAK11189.1"/>
    <property type="molecule type" value="Genomic_DNA"/>
</dbReference>
<dbReference type="EMBL" id="BA000051">
    <property type="protein sequence ID" value="BAE59911.1"/>
    <property type="molecule type" value="Genomic_DNA"/>
</dbReference>
<dbReference type="SMR" id="Q9P889"/>
<dbReference type="STRING" id="510516.Q9P889"/>
<dbReference type="EnsemblFungi" id="BAE59911">
    <property type="protein sequence ID" value="BAE59911"/>
    <property type="gene ID" value="AO090026000464"/>
</dbReference>
<dbReference type="VEuPathDB" id="FungiDB:AO090026000464"/>
<dbReference type="HOGENOM" id="CLU_036230_0_0_1"/>
<dbReference type="OMA" id="YHMARSH"/>
<dbReference type="Proteomes" id="UP000006564">
    <property type="component" value="Chromosome 3"/>
</dbReference>
<dbReference type="GO" id="GO:0005737">
    <property type="term" value="C:cytoplasm"/>
    <property type="evidence" value="ECO:0007669"/>
    <property type="project" value="TreeGrafter"/>
</dbReference>
<dbReference type="GO" id="GO:0005634">
    <property type="term" value="C:nucleus"/>
    <property type="evidence" value="ECO:0007669"/>
    <property type="project" value="UniProtKB-SubCell"/>
</dbReference>
<dbReference type="GO" id="GO:0000978">
    <property type="term" value="F:RNA polymerase II cis-regulatory region sequence-specific DNA binding"/>
    <property type="evidence" value="ECO:0007669"/>
    <property type="project" value="TreeGrafter"/>
</dbReference>
<dbReference type="GO" id="GO:0008270">
    <property type="term" value="F:zinc ion binding"/>
    <property type="evidence" value="ECO:0007669"/>
    <property type="project" value="UniProtKB-KW"/>
</dbReference>
<dbReference type="GO" id="GO:0000433">
    <property type="term" value="P:carbon catabolite repression of transcription from RNA polymerase II promoter by glucose"/>
    <property type="evidence" value="ECO:0007669"/>
    <property type="project" value="TreeGrafter"/>
</dbReference>
<dbReference type="FunFam" id="3.30.160.60:FF:000089">
    <property type="entry name" value="DNA-binding protein creA"/>
    <property type="match status" value="1"/>
</dbReference>
<dbReference type="FunFam" id="3.30.160.60:FF:000152">
    <property type="entry name" value="DNA-binding protein creA"/>
    <property type="match status" value="1"/>
</dbReference>
<dbReference type="Gene3D" id="3.30.160.60">
    <property type="entry name" value="Classic Zinc Finger"/>
    <property type="match status" value="2"/>
</dbReference>
<dbReference type="InterPro" id="IPR051007">
    <property type="entry name" value="creA/MIG_C2H2-ZnF"/>
</dbReference>
<dbReference type="InterPro" id="IPR036236">
    <property type="entry name" value="Znf_C2H2_sf"/>
</dbReference>
<dbReference type="InterPro" id="IPR013087">
    <property type="entry name" value="Znf_C2H2_type"/>
</dbReference>
<dbReference type="PANTHER" id="PTHR47428">
    <property type="entry name" value="REGULATORY PROTEIN MIG1-RELATED"/>
    <property type="match status" value="1"/>
</dbReference>
<dbReference type="PANTHER" id="PTHR47428:SF1">
    <property type="entry name" value="REGULATORY PROTEIN MIG1-RELATED"/>
    <property type="match status" value="1"/>
</dbReference>
<dbReference type="Pfam" id="PF00096">
    <property type="entry name" value="zf-C2H2"/>
    <property type="match status" value="2"/>
</dbReference>
<dbReference type="SMART" id="SM00355">
    <property type="entry name" value="ZnF_C2H2"/>
    <property type="match status" value="2"/>
</dbReference>
<dbReference type="SUPFAM" id="SSF57667">
    <property type="entry name" value="beta-beta-alpha zinc fingers"/>
    <property type="match status" value="1"/>
</dbReference>
<dbReference type="PROSITE" id="PS00028">
    <property type="entry name" value="ZINC_FINGER_C2H2_1"/>
    <property type="match status" value="2"/>
</dbReference>
<dbReference type="PROSITE" id="PS50157">
    <property type="entry name" value="ZINC_FINGER_C2H2_2"/>
    <property type="match status" value="2"/>
</dbReference>
<organism>
    <name type="scientific">Aspergillus oryzae (strain ATCC 42149 / RIB 40)</name>
    <name type="common">Yellow koji mold</name>
    <dbReference type="NCBI Taxonomy" id="510516"/>
    <lineage>
        <taxon>Eukaryota</taxon>
        <taxon>Fungi</taxon>
        <taxon>Dikarya</taxon>
        <taxon>Ascomycota</taxon>
        <taxon>Pezizomycotina</taxon>
        <taxon>Eurotiomycetes</taxon>
        <taxon>Eurotiomycetidae</taxon>
        <taxon>Eurotiales</taxon>
        <taxon>Aspergillaceae</taxon>
        <taxon>Aspergillus</taxon>
        <taxon>Aspergillus subgen. Circumdati</taxon>
    </lineage>
</organism>
<feature type="chain" id="PRO_0000046872" description="DNA-binding protein creA">
    <location>
        <begin position="1"/>
        <end position="429"/>
    </location>
</feature>
<feature type="zinc finger region" description="C2H2-type 1" evidence="2">
    <location>
        <begin position="76"/>
        <end position="98"/>
    </location>
</feature>
<feature type="zinc finger region" description="C2H2-type 2" evidence="2">
    <location>
        <begin position="104"/>
        <end position="128"/>
    </location>
</feature>
<feature type="region of interest" description="Disordered" evidence="3">
    <location>
        <begin position="1"/>
        <end position="71"/>
    </location>
</feature>
<feature type="region of interest" description="Disordered" evidence="3">
    <location>
        <begin position="169"/>
        <end position="189"/>
    </location>
</feature>
<feature type="region of interest" description="Disordered" evidence="3">
    <location>
        <begin position="269"/>
        <end position="333"/>
    </location>
</feature>
<feature type="region of interest" description="Disordered" evidence="3">
    <location>
        <begin position="351"/>
        <end position="391"/>
    </location>
</feature>
<feature type="region of interest" description="Disordered" evidence="3">
    <location>
        <begin position="406"/>
        <end position="429"/>
    </location>
</feature>
<feature type="compositionally biased region" description="Polar residues" evidence="3">
    <location>
        <begin position="8"/>
        <end position="34"/>
    </location>
</feature>
<feature type="compositionally biased region" description="Low complexity" evidence="3">
    <location>
        <begin position="35"/>
        <end position="52"/>
    </location>
</feature>
<feature type="compositionally biased region" description="Basic and acidic residues" evidence="3">
    <location>
        <begin position="275"/>
        <end position="284"/>
    </location>
</feature>
<feature type="compositionally biased region" description="Low complexity" evidence="3">
    <location>
        <begin position="292"/>
        <end position="306"/>
    </location>
</feature>
<feature type="compositionally biased region" description="Low complexity" evidence="3">
    <location>
        <begin position="406"/>
        <end position="422"/>
    </location>
</feature>
<feature type="sequence conflict" description="In Ref. 2; AAK11189." evidence="4" ref="2">
    <original>S</original>
    <variation>F</variation>
    <location>
        <position position="276"/>
    </location>
</feature>
<feature type="sequence conflict" description="In Ref. 2; AAK11189." evidence="4" ref="2">
    <original>P</original>
    <variation>S</variation>
    <location>
        <position position="330"/>
    </location>
</feature>
<reference key="1">
    <citation type="submission" date="2000-02" db="EMBL/GenBank/DDBJ databases">
        <title>Isolation and the nucleotide sequence of the creA gene for a carbon catabolite repressor of Aspergillus oryzae.</title>
        <authorList>
            <person name="Kim J.H."/>
            <person name="Kim S."/>
            <person name="Chae K.S."/>
        </authorList>
    </citation>
    <scope>NUCLEOTIDE SEQUENCE [GENOMIC DNA]</scope>
    <source>
        <strain>KCTC 6983</strain>
    </source>
</reference>
<reference key="2">
    <citation type="submission" date="2000-11" db="EMBL/GenBank/DDBJ databases">
        <title>The creA gene from Aspergillus oryzae.</title>
        <authorList>
            <person name="van den Broek P."/>
        </authorList>
    </citation>
    <scope>NUCLEOTIDE SEQUENCE [GENOMIC DNA]</scope>
    <source>
        <strain>TK3</strain>
    </source>
</reference>
<reference key="3">
    <citation type="journal article" date="2005" name="Nature">
        <title>Genome sequencing and analysis of Aspergillus oryzae.</title>
        <authorList>
            <person name="Machida M."/>
            <person name="Asai K."/>
            <person name="Sano M."/>
            <person name="Tanaka T."/>
            <person name="Kumagai T."/>
            <person name="Terai G."/>
            <person name="Kusumoto K."/>
            <person name="Arima T."/>
            <person name="Akita O."/>
            <person name="Kashiwagi Y."/>
            <person name="Abe K."/>
            <person name="Gomi K."/>
            <person name="Horiuchi H."/>
            <person name="Kitamoto K."/>
            <person name="Kobayashi T."/>
            <person name="Takeuchi M."/>
            <person name="Denning D.W."/>
            <person name="Galagan J.E."/>
            <person name="Nierman W.C."/>
            <person name="Yu J."/>
            <person name="Archer D.B."/>
            <person name="Bennett J.W."/>
            <person name="Bhatnagar D."/>
            <person name="Cleveland T.E."/>
            <person name="Fedorova N.D."/>
            <person name="Gotoh O."/>
            <person name="Horikawa H."/>
            <person name="Hosoyama A."/>
            <person name="Ichinomiya M."/>
            <person name="Igarashi R."/>
            <person name="Iwashita K."/>
            <person name="Juvvadi P.R."/>
            <person name="Kato M."/>
            <person name="Kato Y."/>
            <person name="Kin T."/>
            <person name="Kokubun A."/>
            <person name="Maeda H."/>
            <person name="Maeyama N."/>
            <person name="Maruyama J."/>
            <person name="Nagasaki H."/>
            <person name="Nakajima T."/>
            <person name="Oda K."/>
            <person name="Okada K."/>
            <person name="Paulsen I."/>
            <person name="Sakamoto K."/>
            <person name="Sawano T."/>
            <person name="Takahashi M."/>
            <person name="Takase K."/>
            <person name="Terabayashi Y."/>
            <person name="Wortman J.R."/>
            <person name="Yamada O."/>
            <person name="Yamagata Y."/>
            <person name="Anazawa H."/>
            <person name="Hata Y."/>
            <person name="Koide Y."/>
            <person name="Komori T."/>
            <person name="Koyama Y."/>
            <person name="Minetoki T."/>
            <person name="Suharnan S."/>
            <person name="Tanaka A."/>
            <person name="Isono K."/>
            <person name="Kuhara S."/>
            <person name="Ogasawara N."/>
            <person name="Kikuchi H."/>
        </authorList>
    </citation>
    <scope>NUCLEOTIDE SEQUENCE [LARGE SCALE GENOMIC DNA]</scope>
    <source>
        <strain>ATCC 42149 / RIB 40</strain>
    </source>
</reference>
<name>CREA_ASPOR</name>
<protein>
    <recommendedName>
        <fullName>DNA-binding protein creA</fullName>
    </recommendedName>
    <alternativeName>
        <fullName>Carbon catabolite repressor A</fullName>
    </alternativeName>
</protein>
<proteinExistence type="inferred from homology"/>
<keyword id="KW-0238">DNA-binding</keyword>
<keyword id="KW-0479">Metal-binding</keyword>
<keyword id="KW-0539">Nucleus</keyword>
<keyword id="KW-1185">Reference proteome</keyword>
<keyword id="KW-0677">Repeat</keyword>
<keyword id="KW-0678">Repressor</keyword>
<keyword id="KW-0804">Transcription</keyword>
<keyword id="KW-0805">Transcription regulation</keyword>
<keyword id="KW-0832">Ubl conjugation</keyword>
<keyword id="KW-0862">Zinc</keyword>
<keyword id="KW-0863">Zinc-finger</keyword>